<evidence type="ECO:0000250" key="1"/>
<evidence type="ECO:0000250" key="2">
    <source>
        <dbReference type="UniProtKB" id="P49333"/>
    </source>
</evidence>
<evidence type="ECO:0000255" key="3"/>
<evidence type="ECO:0000255" key="4">
    <source>
        <dbReference type="PROSITE-ProRule" id="PRU00107"/>
    </source>
</evidence>
<evidence type="ECO:0000269" key="5">
    <source>
    </source>
</evidence>
<evidence type="ECO:0000269" key="6">
    <source>
    </source>
</evidence>
<evidence type="ECO:0000269" key="7">
    <source>
    </source>
</evidence>
<evidence type="ECO:0000269" key="8">
    <source>
    </source>
</evidence>
<evidence type="ECO:0000269" key="9">
    <source>
    </source>
</evidence>
<evidence type="ECO:0000305" key="10"/>
<evidence type="ECO:0000305" key="11">
    <source>
    </source>
</evidence>
<evidence type="ECO:0007829" key="12">
    <source>
        <dbReference type="PDB" id="4MT8"/>
    </source>
</evidence>
<proteinExistence type="evidence at protein level"/>
<dbReference type="EC" id="2.7.11.-"/>
<dbReference type="EC" id="2.7.13.3"/>
<dbReference type="EMBL" id="U21952">
    <property type="protein sequence ID" value="AAC49090.1"/>
    <property type="molecule type" value="Genomic_DNA"/>
</dbReference>
<dbReference type="EMBL" id="AC002409">
    <property type="protein sequence ID" value="AAB86454.1"/>
    <property type="molecule type" value="Genomic_DNA"/>
</dbReference>
<dbReference type="EMBL" id="CP002685">
    <property type="protein sequence ID" value="AEC09904.1"/>
    <property type="molecule type" value="Genomic_DNA"/>
</dbReference>
<dbReference type="EMBL" id="AY054532">
    <property type="protein sequence ID" value="AAK96723.1"/>
    <property type="molecule type" value="mRNA"/>
</dbReference>
<dbReference type="EMBL" id="BT000159">
    <property type="protein sequence ID" value="AAN15478.1"/>
    <property type="molecule type" value="mRNA"/>
</dbReference>
<dbReference type="PIR" id="T00758">
    <property type="entry name" value="T00758"/>
</dbReference>
<dbReference type="RefSeq" id="NP_181626.1">
    <property type="nucleotide sequence ID" value="NM_129658.4"/>
</dbReference>
<dbReference type="PDB" id="4MT8">
    <property type="method" value="X-ray"/>
    <property type="resolution" value="1.90 A"/>
    <property type="chains" value="A/B=308-407"/>
</dbReference>
<dbReference type="PDB" id="4MTX">
    <property type="method" value="X-ray"/>
    <property type="resolution" value="2.15 A"/>
    <property type="chains" value="A/B/C/D=308-407"/>
</dbReference>
<dbReference type="PDBsum" id="4MT8"/>
<dbReference type="PDBsum" id="4MTX"/>
<dbReference type="SMR" id="Q38846"/>
<dbReference type="BioGRID" id="4030">
    <property type="interactions" value="6"/>
</dbReference>
<dbReference type="FunCoup" id="Q38846">
    <property type="interactions" value="449"/>
</dbReference>
<dbReference type="IntAct" id="Q38846">
    <property type="interactions" value="5"/>
</dbReference>
<dbReference type="STRING" id="3702.Q38846"/>
<dbReference type="PaxDb" id="3702-AT2G40940.1"/>
<dbReference type="ProteomicsDB" id="220703"/>
<dbReference type="EnsemblPlants" id="AT2G40940.1">
    <property type="protein sequence ID" value="AT2G40940.1"/>
    <property type="gene ID" value="AT2G40940"/>
</dbReference>
<dbReference type="GeneID" id="818693"/>
<dbReference type="Gramene" id="AT2G40940.1">
    <property type="protein sequence ID" value="AT2G40940.1"/>
    <property type="gene ID" value="AT2G40940"/>
</dbReference>
<dbReference type="KEGG" id="ath:AT2G40940"/>
<dbReference type="Araport" id="AT2G40940"/>
<dbReference type="TAIR" id="AT2G40940">
    <property type="gene designation" value="ERS1"/>
</dbReference>
<dbReference type="eggNOG" id="KOG0519">
    <property type="taxonomic scope" value="Eukaryota"/>
</dbReference>
<dbReference type="HOGENOM" id="CLU_000445_114_48_1"/>
<dbReference type="InParanoid" id="Q38846"/>
<dbReference type="OMA" id="RQEAHRY"/>
<dbReference type="OrthoDB" id="60033at2759"/>
<dbReference type="PhylomeDB" id="Q38846"/>
<dbReference type="EvolutionaryTrace" id="Q38846"/>
<dbReference type="PRO" id="PR:Q38846"/>
<dbReference type="Proteomes" id="UP000006548">
    <property type="component" value="Chromosome 2"/>
</dbReference>
<dbReference type="ExpressionAtlas" id="Q38846">
    <property type="expression patterns" value="baseline and differential"/>
</dbReference>
<dbReference type="GO" id="GO:0005783">
    <property type="term" value="C:endoplasmic reticulum"/>
    <property type="evidence" value="ECO:0000314"/>
    <property type="project" value="TAIR"/>
</dbReference>
<dbReference type="GO" id="GO:0005789">
    <property type="term" value="C:endoplasmic reticulum membrane"/>
    <property type="evidence" value="ECO:0007669"/>
    <property type="project" value="UniProtKB-SubCell"/>
</dbReference>
<dbReference type="GO" id="GO:0005524">
    <property type="term" value="F:ATP binding"/>
    <property type="evidence" value="ECO:0007669"/>
    <property type="project" value="UniProtKB-KW"/>
</dbReference>
<dbReference type="GO" id="GO:0051740">
    <property type="term" value="F:ethylene binding"/>
    <property type="evidence" value="ECO:0000314"/>
    <property type="project" value="TAIR"/>
</dbReference>
<dbReference type="GO" id="GO:0046872">
    <property type="term" value="F:metal ion binding"/>
    <property type="evidence" value="ECO:0007669"/>
    <property type="project" value="UniProtKB-KW"/>
</dbReference>
<dbReference type="GO" id="GO:0000155">
    <property type="term" value="F:phosphorelay sensor kinase activity"/>
    <property type="evidence" value="ECO:0007669"/>
    <property type="project" value="InterPro"/>
</dbReference>
<dbReference type="GO" id="GO:0004673">
    <property type="term" value="F:protein histidine kinase activity"/>
    <property type="evidence" value="ECO:0000304"/>
    <property type="project" value="TAIR"/>
</dbReference>
<dbReference type="GO" id="GO:0004674">
    <property type="term" value="F:protein serine/threonine kinase activity"/>
    <property type="evidence" value="ECO:0007669"/>
    <property type="project" value="UniProtKB-KW"/>
</dbReference>
<dbReference type="GO" id="GO:0009873">
    <property type="term" value="P:ethylene-activated signaling pathway"/>
    <property type="evidence" value="ECO:0007669"/>
    <property type="project" value="UniProtKB-KW"/>
</dbReference>
<dbReference type="GO" id="GO:0010105">
    <property type="term" value="P:negative regulation of ethylene-activated signaling pathway"/>
    <property type="evidence" value="ECO:0000304"/>
    <property type="project" value="TAIR"/>
</dbReference>
<dbReference type="CDD" id="cd00082">
    <property type="entry name" value="HisKA"/>
    <property type="match status" value="1"/>
</dbReference>
<dbReference type="FunFam" id="1.10.287.130:FF:000004">
    <property type="entry name" value="Ethylene receptor 1"/>
    <property type="match status" value="1"/>
</dbReference>
<dbReference type="FunFam" id="3.30.565.10:FF:000030">
    <property type="entry name" value="Ethylene receptor 1"/>
    <property type="match status" value="1"/>
</dbReference>
<dbReference type="FunFam" id="3.30.450.40:FF:000026">
    <property type="entry name" value="Ethylene response sensor"/>
    <property type="match status" value="1"/>
</dbReference>
<dbReference type="Gene3D" id="1.10.287.130">
    <property type="match status" value="1"/>
</dbReference>
<dbReference type="Gene3D" id="3.30.450.40">
    <property type="match status" value="1"/>
</dbReference>
<dbReference type="Gene3D" id="3.30.565.10">
    <property type="entry name" value="Histidine kinase-like ATPase, C-terminal domain"/>
    <property type="match status" value="1"/>
</dbReference>
<dbReference type="InterPro" id="IPR003018">
    <property type="entry name" value="GAF"/>
</dbReference>
<dbReference type="InterPro" id="IPR029016">
    <property type="entry name" value="GAF-like_dom_sf"/>
</dbReference>
<dbReference type="InterPro" id="IPR036890">
    <property type="entry name" value="HATPase_C_sf"/>
</dbReference>
<dbReference type="InterPro" id="IPR005467">
    <property type="entry name" value="His_kinase_dom"/>
</dbReference>
<dbReference type="InterPro" id="IPR003661">
    <property type="entry name" value="HisK_dim/P_dom"/>
</dbReference>
<dbReference type="InterPro" id="IPR036097">
    <property type="entry name" value="HisK_dim/P_sf"/>
</dbReference>
<dbReference type="InterPro" id="IPR004358">
    <property type="entry name" value="Sig_transdc_His_kin-like_C"/>
</dbReference>
<dbReference type="PANTHER" id="PTHR24423:SF625">
    <property type="entry name" value="ETHYLENE RESPONSE SENSOR 1"/>
    <property type="match status" value="1"/>
</dbReference>
<dbReference type="PANTHER" id="PTHR24423">
    <property type="entry name" value="TWO-COMPONENT SENSOR HISTIDINE KINASE"/>
    <property type="match status" value="1"/>
</dbReference>
<dbReference type="Pfam" id="PF25487">
    <property type="entry name" value="ETR1_N"/>
    <property type="match status" value="1"/>
</dbReference>
<dbReference type="Pfam" id="PF01590">
    <property type="entry name" value="GAF"/>
    <property type="match status" value="1"/>
</dbReference>
<dbReference type="Pfam" id="PF02518">
    <property type="entry name" value="HATPase_c"/>
    <property type="match status" value="1"/>
</dbReference>
<dbReference type="Pfam" id="PF00512">
    <property type="entry name" value="HisKA"/>
    <property type="match status" value="1"/>
</dbReference>
<dbReference type="PRINTS" id="PR00344">
    <property type="entry name" value="BCTRLSENSOR"/>
</dbReference>
<dbReference type="SMART" id="SM00065">
    <property type="entry name" value="GAF"/>
    <property type="match status" value="1"/>
</dbReference>
<dbReference type="SMART" id="SM00387">
    <property type="entry name" value="HATPase_c"/>
    <property type="match status" value="1"/>
</dbReference>
<dbReference type="SMART" id="SM00388">
    <property type="entry name" value="HisKA"/>
    <property type="match status" value="1"/>
</dbReference>
<dbReference type="SUPFAM" id="SSF55874">
    <property type="entry name" value="ATPase domain of HSP90 chaperone/DNA topoisomerase II/histidine kinase"/>
    <property type="match status" value="1"/>
</dbReference>
<dbReference type="SUPFAM" id="SSF55781">
    <property type="entry name" value="GAF domain-like"/>
    <property type="match status" value="1"/>
</dbReference>
<dbReference type="SUPFAM" id="SSF47384">
    <property type="entry name" value="Homodimeric domain of signal transducing histidine kinase"/>
    <property type="match status" value="1"/>
</dbReference>
<dbReference type="PROSITE" id="PS50109">
    <property type="entry name" value="HIS_KIN"/>
    <property type="match status" value="1"/>
</dbReference>
<organism>
    <name type="scientific">Arabidopsis thaliana</name>
    <name type="common">Mouse-ear cress</name>
    <dbReference type="NCBI Taxonomy" id="3702"/>
    <lineage>
        <taxon>Eukaryota</taxon>
        <taxon>Viridiplantae</taxon>
        <taxon>Streptophyta</taxon>
        <taxon>Embryophyta</taxon>
        <taxon>Tracheophyta</taxon>
        <taxon>Spermatophyta</taxon>
        <taxon>Magnoliopsida</taxon>
        <taxon>eudicotyledons</taxon>
        <taxon>Gunneridae</taxon>
        <taxon>Pentapetalae</taxon>
        <taxon>rosids</taxon>
        <taxon>malvids</taxon>
        <taxon>Brassicales</taxon>
        <taxon>Brassicaceae</taxon>
        <taxon>Camelineae</taxon>
        <taxon>Arabidopsis</taxon>
    </lineage>
</organism>
<sequence length="613" mass="68333">MESCDCFETHVNQDDLLVKYQYISDALIALAYFSIPLELIYFVQKSAFFPYKWVLMQFGAFIILCGATHFINLWMFFMHSKAVAIVMTIAKVSCAVVSCATALMLVHIIPDLLSVKNRELFLKKKADELDREMGLILTQEETGRHVRMLTHGIRRTLDRHTILRTTLVELGKTLCLEECALWMPSQSGLYLQLSHTLSHKIQVGSSVPINLPIINELFNSAQAMHIPHSCPLAKIGPPVGRYSPPEVVSVRVPLLHLSNFQGSDWSDLSGKGYAIMVLILPTDGARKWRDHELELVENVADQVAVALSHAAILEESMHARDQLMEQNFALDKARQEAEMAVHARNDFLAVMNHEMRTPMHAIISLSSLLLETELSPEQRVMIETILKSSNLVATLISDVLDLSRLEDGSLLLENEPFSLQAIFEEVISLIKPIASVKKLSTNLILSADLPTYAIGDEKRLMQTILNIMGNAVKFTKEGYISIIASIMKPESLQELPSPEFFPVLSDSHFYLCVQVKDTGCGIHTQDIPLLFTKFVQPRTGTQRNHSGGGLGLALCKRFVGLMGGYMWIESEGLEKGCTASFIIRLGICNGPSSSSGSMALHLAAKSQTRPWNW</sequence>
<keyword id="KW-0002">3D-structure</keyword>
<keyword id="KW-0067">ATP-binding</keyword>
<keyword id="KW-0186">Copper</keyword>
<keyword id="KW-1015">Disulfide bond</keyword>
<keyword id="KW-0256">Endoplasmic reticulum</keyword>
<keyword id="KW-0936">Ethylene signaling pathway</keyword>
<keyword id="KW-0418">Kinase</keyword>
<keyword id="KW-0472">Membrane</keyword>
<keyword id="KW-0479">Metal-binding</keyword>
<keyword id="KW-0547">Nucleotide-binding</keyword>
<keyword id="KW-0597">Phosphoprotein</keyword>
<keyword id="KW-0675">Receptor</keyword>
<keyword id="KW-1185">Reference proteome</keyword>
<keyword id="KW-0723">Serine/threonine-protein kinase</keyword>
<keyword id="KW-0808">Transferase</keyword>
<keyword id="KW-0812">Transmembrane</keyword>
<keyword id="KW-1133">Transmembrane helix</keyword>
<keyword id="KW-0902">Two-component regulatory system</keyword>
<name>ERS1_ARATH</name>
<gene>
    <name type="primary">ERS1</name>
    <name type="synonym">ERS</name>
    <name type="ordered locus">At2g40940</name>
    <name type="ORF">T20B5.14</name>
</gene>
<accession>Q38846</accession>
<protein>
    <recommendedName>
        <fullName>Ethylene response sensor 1</fullName>
        <shortName>AtERS1</shortName>
        <ecNumber>2.7.11.-</ecNumber>
        <ecNumber>2.7.13.3</ecNumber>
    </recommendedName>
    <alternativeName>
        <fullName>Protein ERS1</fullName>
    </alternativeName>
</protein>
<comment type="function">
    <text>Ethylene receptor related to bacterial two-component regulators. Acts as a redundant negative regulator of ethylene signaling.</text>
</comment>
<comment type="catalytic activity">
    <reaction>
        <text>ATP + protein L-histidine = ADP + protein N-phospho-L-histidine.</text>
        <dbReference type="EC" id="2.7.13.3"/>
    </reaction>
</comment>
<comment type="cofactor">
    <cofactor evidence="1">
        <name>Cu cation</name>
        <dbReference type="ChEBI" id="CHEBI:23378"/>
    </cofactor>
    <text evidence="1">Binds 1 copper ion per dimer.</text>
</comment>
<comment type="subunit">
    <text evidence="5">Homodimer; disulfide-linked. Heteromer with ETR1.</text>
</comment>
<comment type="interaction">
    <interactant intactId="EBI-1606754">
        <id>Q38846</id>
    </interactant>
    <interactant intactId="EBI-1606697">
        <id>Q05609</id>
        <label>CTR1</label>
    </interactant>
    <organismsDiffer>false</organismsDiffer>
    <experiments>2</experiments>
</comment>
<comment type="interaction">
    <interactant intactId="EBI-1606754">
        <id>Q38846</id>
    </interactant>
    <interactant intactId="EBI-476071">
        <id>Q8L7L8</id>
        <label>TRP1</label>
    </interactant>
    <organismsDiffer>false</organismsDiffer>
    <experiments>2</experiments>
</comment>
<comment type="subcellular location">
    <subcellularLocation>
        <location evidence="11">Endoplasmic reticulum membrane</location>
        <topology evidence="11">Multi-pass membrane protein</topology>
    </subcellularLocation>
</comment>
<comment type="tissue specificity">
    <text evidence="9">Expressed in etiolated seedlings, leaves, stems, roots, flowers, embryos, anthers, carpels and ovules.</text>
</comment>
<comment type="induction">
    <text evidence="8 9">By ethylene.</text>
</comment>
<comment type="PTM">
    <text evidence="6">Autophosphorylated on both His and Ser residues in the presence of manganese. Loss of His autophosphorylation in the presence of both manganese and magnesium.</text>
</comment>
<comment type="disruption phenotype">
    <text evidence="7">No visible phenotype in ethylene response; due to the redundancy with ETR1. Ers1 and etr1 double mutants display a constitutive ethylene-response phenotype.</text>
</comment>
<comment type="similarity">
    <text evidence="10">Belongs to the ethylene receptor family.</text>
</comment>
<reference key="1">
    <citation type="journal article" date="1995" name="Science">
        <title>Ethylene insensitivity conferred by Arabidopsis ERS gene.</title>
        <authorList>
            <person name="Hua J."/>
            <person name="Chang C."/>
            <person name="Sun Q."/>
            <person name="Meyerowitz E.M."/>
        </authorList>
    </citation>
    <scope>NUCLEOTIDE SEQUENCE [GENOMIC DNA]</scope>
    <source>
        <strain>cv. Columbia</strain>
    </source>
</reference>
<reference key="2">
    <citation type="journal article" date="1999" name="Nature">
        <title>Sequence and analysis of chromosome 2 of the plant Arabidopsis thaliana.</title>
        <authorList>
            <person name="Lin X."/>
            <person name="Kaul S."/>
            <person name="Rounsley S.D."/>
            <person name="Shea T.P."/>
            <person name="Benito M.-I."/>
            <person name="Town C.D."/>
            <person name="Fujii C.Y."/>
            <person name="Mason T.M."/>
            <person name="Bowman C.L."/>
            <person name="Barnstead M.E."/>
            <person name="Feldblyum T.V."/>
            <person name="Buell C.R."/>
            <person name="Ketchum K.A."/>
            <person name="Lee J.J."/>
            <person name="Ronning C.M."/>
            <person name="Koo H.L."/>
            <person name="Moffat K.S."/>
            <person name="Cronin L.A."/>
            <person name="Shen M."/>
            <person name="Pai G."/>
            <person name="Van Aken S."/>
            <person name="Umayam L."/>
            <person name="Tallon L.J."/>
            <person name="Gill J.E."/>
            <person name="Adams M.D."/>
            <person name="Carrera A.J."/>
            <person name="Creasy T.H."/>
            <person name="Goodman H.M."/>
            <person name="Somerville C.R."/>
            <person name="Copenhaver G.P."/>
            <person name="Preuss D."/>
            <person name="Nierman W.C."/>
            <person name="White O."/>
            <person name="Eisen J.A."/>
            <person name="Salzberg S.L."/>
            <person name="Fraser C.M."/>
            <person name="Venter J.C."/>
        </authorList>
    </citation>
    <scope>NUCLEOTIDE SEQUENCE [LARGE SCALE GENOMIC DNA]</scope>
    <source>
        <strain>cv. Columbia</strain>
    </source>
</reference>
<reference key="3">
    <citation type="journal article" date="2017" name="Plant J.">
        <title>Araport11: a complete reannotation of the Arabidopsis thaliana reference genome.</title>
        <authorList>
            <person name="Cheng C.Y."/>
            <person name="Krishnakumar V."/>
            <person name="Chan A.P."/>
            <person name="Thibaud-Nissen F."/>
            <person name="Schobel S."/>
            <person name="Town C.D."/>
        </authorList>
    </citation>
    <scope>GENOME REANNOTATION</scope>
    <source>
        <strain>cv. Columbia</strain>
    </source>
</reference>
<reference key="4">
    <citation type="journal article" date="2003" name="Science">
        <title>Empirical analysis of transcriptional activity in the Arabidopsis genome.</title>
        <authorList>
            <person name="Yamada K."/>
            <person name="Lim J."/>
            <person name="Dale J.M."/>
            <person name="Chen H."/>
            <person name="Shinn P."/>
            <person name="Palm C.J."/>
            <person name="Southwick A.M."/>
            <person name="Wu H.C."/>
            <person name="Kim C.J."/>
            <person name="Nguyen M."/>
            <person name="Pham P.K."/>
            <person name="Cheuk R.F."/>
            <person name="Karlin-Newmann G."/>
            <person name="Liu S.X."/>
            <person name="Lam B."/>
            <person name="Sakano H."/>
            <person name="Wu T."/>
            <person name="Yu G."/>
            <person name="Miranda M."/>
            <person name="Quach H.L."/>
            <person name="Tripp M."/>
            <person name="Chang C.H."/>
            <person name="Lee J.M."/>
            <person name="Toriumi M.J."/>
            <person name="Chan M.M."/>
            <person name="Tang C.C."/>
            <person name="Onodera C.S."/>
            <person name="Deng J.M."/>
            <person name="Akiyama K."/>
            <person name="Ansari Y."/>
            <person name="Arakawa T."/>
            <person name="Banh J."/>
            <person name="Banno F."/>
            <person name="Bowser L."/>
            <person name="Brooks S.Y."/>
            <person name="Carninci P."/>
            <person name="Chao Q."/>
            <person name="Choy N."/>
            <person name="Enju A."/>
            <person name="Goldsmith A.D."/>
            <person name="Gurjal M."/>
            <person name="Hansen N.F."/>
            <person name="Hayashizaki Y."/>
            <person name="Johnson-Hopson C."/>
            <person name="Hsuan V.W."/>
            <person name="Iida K."/>
            <person name="Karnes M."/>
            <person name="Khan S."/>
            <person name="Koesema E."/>
            <person name="Ishida J."/>
            <person name="Jiang P.X."/>
            <person name="Jones T."/>
            <person name="Kawai J."/>
            <person name="Kamiya A."/>
            <person name="Meyers C."/>
            <person name="Nakajima M."/>
            <person name="Narusaka M."/>
            <person name="Seki M."/>
            <person name="Sakurai T."/>
            <person name="Satou M."/>
            <person name="Tamse R."/>
            <person name="Vaysberg M."/>
            <person name="Wallender E.K."/>
            <person name="Wong C."/>
            <person name="Yamamura Y."/>
            <person name="Yuan S."/>
            <person name="Shinozaki K."/>
            <person name="Davis R.W."/>
            <person name="Theologis A."/>
            <person name="Ecker J.R."/>
        </authorList>
    </citation>
    <scope>NUCLEOTIDE SEQUENCE [LARGE SCALE MRNA]</scope>
    <source>
        <strain>cv. Columbia</strain>
    </source>
</reference>
<reference key="5">
    <citation type="journal article" date="1998" name="Plant Cell">
        <title>EIN4 and ERS2 are members of the putative ethylene receptor gene family in Arabidopsis.</title>
        <authorList>
            <person name="Hua J."/>
            <person name="Sakai H."/>
            <person name="Nourizadeh S."/>
            <person name="Chen Q.G."/>
            <person name="Bleecker A.B."/>
            <person name="Ecker J.R."/>
            <person name="Meyerowitz E.M."/>
        </authorList>
    </citation>
    <scope>TISSUE SPECIFICITY</scope>
    <scope>INDUCTION BY ETHYLENE</scope>
</reference>
<reference key="6">
    <citation type="journal article" date="2000" name="Plant Physiol.">
        <title>Ethylene perception by the ERS1 protein in Arabidopsis.</title>
        <authorList>
            <person name="Hall A.E."/>
            <person name="Findell J.L."/>
            <person name="Schaller G.E."/>
            <person name="Sisler E.C."/>
            <person name="Bleecker A.B."/>
        </authorList>
    </citation>
    <scope>DISULFIDE BONDS</scope>
    <scope>SUBCELLULAR LOCATION</scope>
</reference>
<reference key="7">
    <citation type="journal article" date="2004" name="J. Biol. Chem.">
        <title>Autophosphorylation activity of the Arabidopsis ethylene receptor multigene family.</title>
        <authorList>
            <person name="Moussatche P."/>
            <person name="Klee H.J."/>
        </authorList>
    </citation>
    <scope>PHOSPHORYLATION</scope>
</reference>
<reference key="8">
    <citation type="journal article" date="2007" name="BMC Plant Biol.">
        <title>A strong constitutive ethylene-response phenotype conferred on Arabidopsis plants containing null mutations in the ethylene receptors ETR1 and ERS1.</title>
        <authorList>
            <person name="Qu X."/>
            <person name="Hall B.P."/>
            <person name="Gao Z."/>
            <person name="Schaller G.E."/>
        </authorList>
    </citation>
    <scope>DISRUPTION PHENOTYPE</scope>
</reference>
<reference key="9">
    <citation type="journal article" date="2008" name="J. Biol. Chem.">
        <title>Heteromeric interactions among ethylene receptors mediate signaling in Arabidopsis.</title>
        <authorList>
            <person name="Gao Z."/>
            <person name="Wen C.-K."/>
            <person name="Binder B.M."/>
            <person name="Chen Y.-F."/>
            <person name="Chang J."/>
            <person name="Chiang Y.-H."/>
            <person name="Kerris R.J. III"/>
            <person name="Chang C."/>
            <person name="Schaller G.E."/>
        </authorList>
    </citation>
    <scope>INTERACTION WITH ETR1</scope>
    <scope>INDUCTION BY ETHYLENE</scope>
</reference>
<feature type="chain" id="PRO_0000378142" description="Ethylene response sensor 1">
    <location>
        <begin position="1"/>
        <end position="613"/>
    </location>
</feature>
<feature type="transmembrane region" description="Helical" evidence="3">
    <location>
        <begin position="23"/>
        <end position="43"/>
    </location>
</feature>
<feature type="transmembrane region" description="Helical" evidence="3">
    <location>
        <begin position="58"/>
        <end position="78"/>
    </location>
</feature>
<feature type="transmembrane region" description="Helical" evidence="3">
    <location>
        <begin position="95"/>
        <end position="115"/>
    </location>
</feature>
<feature type="domain" description="GAF">
    <location>
        <begin position="158"/>
        <end position="307"/>
    </location>
</feature>
<feature type="domain" description="Histidine kinase" evidence="4">
    <location>
        <begin position="350"/>
        <end position="589"/>
    </location>
</feature>
<feature type="binding site" evidence="1">
    <location>
        <position position="65"/>
    </location>
    <ligand>
        <name>Cu cation</name>
        <dbReference type="ChEBI" id="CHEBI:23378"/>
    </ligand>
</feature>
<feature type="binding site" evidence="1">
    <location>
        <position position="69"/>
    </location>
    <ligand>
        <name>Cu cation</name>
        <dbReference type="ChEBI" id="CHEBI:23378"/>
    </ligand>
</feature>
<feature type="modified residue" description="Phosphohistidine; by autocatalysis" evidence="2 4">
    <location>
        <position position="353"/>
    </location>
</feature>
<feature type="disulfide bond" description="Interchain" evidence="1">
    <location>
        <position position="4"/>
    </location>
</feature>
<feature type="disulfide bond" description="Interchain" evidence="1">
    <location>
        <position position="6"/>
    </location>
</feature>
<feature type="helix" evidence="12">
    <location>
        <begin position="309"/>
        <end position="370"/>
    </location>
</feature>
<feature type="helix" evidence="12">
    <location>
        <begin position="376"/>
        <end position="403"/>
    </location>
</feature>